<keyword id="KW-0028">Amino-acid biosynthesis</keyword>
<keyword id="KW-0055">Arginine biosynthesis</keyword>
<keyword id="KW-0067">ATP-binding</keyword>
<keyword id="KW-0963">Cytoplasm</keyword>
<keyword id="KW-0436">Ligase</keyword>
<keyword id="KW-0547">Nucleotide-binding</keyword>
<organism>
    <name type="scientific">Serratia proteamaculans (strain 568)</name>
    <dbReference type="NCBI Taxonomy" id="399741"/>
    <lineage>
        <taxon>Bacteria</taxon>
        <taxon>Pseudomonadati</taxon>
        <taxon>Pseudomonadota</taxon>
        <taxon>Gammaproteobacteria</taxon>
        <taxon>Enterobacterales</taxon>
        <taxon>Yersiniaceae</taxon>
        <taxon>Serratia</taxon>
    </lineage>
</organism>
<dbReference type="EC" id="6.3.4.5" evidence="1"/>
<dbReference type="EMBL" id="CP000826">
    <property type="protein sequence ID" value="ABV43872.1"/>
    <property type="molecule type" value="Genomic_DNA"/>
</dbReference>
<dbReference type="SMR" id="A8GL82"/>
<dbReference type="STRING" id="399741.Spro_4779"/>
<dbReference type="KEGG" id="spe:Spro_4779"/>
<dbReference type="eggNOG" id="COG0137">
    <property type="taxonomic scope" value="Bacteria"/>
</dbReference>
<dbReference type="HOGENOM" id="CLU_032784_4_2_6"/>
<dbReference type="OrthoDB" id="9801641at2"/>
<dbReference type="UniPathway" id="UPA00068">
    <property type="reaction ID" value="UER00113"/>
</dbReference>
<dbReference type="GO" id="GO:0005737">
    <property type="term" value="C:cytoplasm"/>
    <property type="evidence" value="ECO:0007669"/>
    <property type="project" value="UniProtKB-SubCell"/>
</dbReference>
<dbReference type="GO" id="GO:0004055">
    <property type="term" value="F:argininosuccinate synthase activity"/>
    <property type="evidence" value="ECO:0007669"/>
    <property type="project" value="UniProtKB-UniRule"/>
</dbReference>
<dbReference type="GO" id="GO:0005524">
    <property type="term" value="F:ATP binding"/>
    <property type="evidence" value="ECO:0007669"/>
    <property type="project" value="UniProtKB-UniRule"/>
</dbReference>
<dbReference type="GO" id="GO:0000053">
    <property type="term" value="P:argininosuccinate metabolic process"/>
    <property type="evidence" value="ECO:0007669"/>
    <property type="project" value="TreeGrafter"/>
</dbReference>
<dbReference type="GO" id="GO:0006526">
    <property type="term" value="P:L-arginine biosynthetic process"/>
    <property type="evidence" value="ECO:0007669"/>
    <property type="project" value="UniProtKB-UniRule"/>
</dbReference>
<dbReference type="GO" id="GO:0000050">
    <property type="term" value="P:urea cycle"/>
    <property type="evidence" value="ECO:0007669"/>
    <property type="project" value="TreeGrafter"/>
</dbReference>
<dbReference type="CDD" id="cd01999">
    <property type="entry name" value="ASS"/>
    <property type="match status" value="1"/>
</dbReference>
<dbReference type="FunFam" id="3.40.50.620:FF:000019">
    <property type="entry name" value="Argininosuccinate synthase"/>
    <property type="match status" value="1"/>
</dbReference>
<dbReference type="FunFam" id="3.90.1260.10:FF:000007">
    <property type="entry name" value="Argininosuccinate synthase"/>
    <property type="match status" value="1"/>
</dbReference>
<dbReference type="Gene3D" id="3.90.1260.10">
    <property type="entry name" value="Argininosuccinate synthetase, chain A, domain 2"/>
    <property type="match status" value="1"/>
</dbReference>
<dbReference type="Gene3D" id="3.40.50.620">
    <property type="entry name" value="HUPs"/>
    <property type="match status" value="1"/>
</dbReference>
<dbReference type="Gene3D" id="1.20.5.470">
    <property type="entry name" value="Single helix bin"/>
    <property type="match status" value="1"/>
</dbReference>
<dbReference type="HAMAP" id="MF_00005">
    <property type="entry name" value="Arg_succ_synth_type1"/>
    <property type="match status" value="1"/>
</dbReference>
<dbReference type="InterPro" id="IPR048268">
    <property type="entry name" value="Arginosuc_syn_C"/>
</dbReference>
<dbReference type="InterPro" id="IPR048267">
    <property type="entry name" value="Arginosuc_syn_N"/>
</dbReference>
<dbReference type="InterPro" id="IPR001518">
    <property type="entry name" value="Arginosuc_synth"/>
</dbReference>
<dbReference type="InterPro" id="IPR018223">
    <property type="entry name" value="Arginosuc_synth_CS"/>
</dbReference>
<dbReference type="InterPro" id="IPR023434">
    <property type="entry name" value="Arginosuc_synth_type_1_subfam"/>
</dbReference>
<dbReference type="InterPro" id="IPR024074">
    <property type="entry name" value="AS_cat/multimer_dom_body"/>
</dbReference>
<dbReference type="InterPro" id="IPR014729">
    <property type="entry name" value="Rossmann-like_a/b/a_fold"/>
</dbReference>
<dbReference type="NCBIfam" id="TIGR00032">
    <property type="entry name" value="argG"/>
    <property type="match status" value="1"/>
</dbReference>
<dbReference type="NCBIfam" id="NF001770">
    <property type="entry name" value="PRK00509.1"/>
    <property type="match status" value="1"/>
</dbReference>
<dbReference type="PANTHER" id="PTHR11587">
    <property type="entry name" value="ARGININOSUCCINATE SYNTHASE"/>
    <property type="match status" value="1"/>
</dbReference>
<dbReference type="PANTHER" id="PTHR11587:SF2">
    <property type="entry name" value="ARGININOSUCCINATE SYNTHASE"/>
    <property type="match status" value="1"/>
</dbReference>
<dbReference type="Pfam" id="PF20979">
    <property type="entry name" value="Arginosuc_syn_C"/>
    <property type="match status" value="1"/>
</dbReference>
<dbReference type="Pfam" id="PF00764">
    <property type="entry name" value="Arginosuc_synth"/>
    <property type="match status" value="1"/>
</dbReference>
<dbReference type="SUPFAM" id="SSF52402">
    <property type="entry name" value="Adenine nucleotide alpha hydrolases-like"/>
    <property type="match status" value="1"/>
</dbReference>
<dbReference type="SUPFAM" id="SSF69864">
    <property type="entry name" value="Argininosuccinate synthetase, C-terminal domain"/>
    <property type="match status" value="1"/>
</dbReference>
<dbReference type="PROSITE" id="PS00564">
    <property type="entry name" value="ARGININOSUCCIN_SYN_1"/>
    <property type="match status" value="1"/>
</dbReference>
<dbReference type="PROSITE" id="PS00565">
    <property type="entry name" value="ARGININOSUCCIN_SYN_2"/>
    <property type="match status" value="1"/>
</dbReference>
<accession>A8GL82</accession>
<feature type="chain" id="PRO_1000057044" description="Argininosuccinate synthase">
    <location>
        <begin position="1"/>
        <end position="406"/>
    </location>
</feature>
<feature type="binding site" evidence="1">
    <location>
        <begin position="12"/>
        <end position="20"/>
    </location>
    <ligand>
        <name>ATP</name>
        <dbReference type="ChEBI" id="CHEBI:30616"/>
    </ligand>
</feature>
<feature type="binding site" evidence="1">
    <location>
        <position position="40"/>
    </location>
    <ligand>
        <name>ATP</name>
        <dbReference type="ChEBI" id="CHEBI:30616"/>
    </ligand>
</feature>
<feature type="binding site" evidence="1">
    <location>
        <position position="92"/>
    </location>
    <ligand>
        <name>L-citrulline</name>
        <dbReference type="ChEBI" id="CHEBI:57743"/>
    </ligand>
</feature>
<feature type="binding site" evidence="1">
    <location>
        <position position="97"/>
    </location>
    <ligand>
        <name>L-citrulline</name>
        <dbReference type="ChEBI" id="CHEBI:57743"/>
    </ligand>
</feature>
<feature type="binding site" evidence="1">
    <location>
        <position position="122"/>
    </location>
    <ligand>
        <name>ATP</name>
        <dbReference type="ChEBI" id="CHEBI:30616"/>
    </ligand>
</feature>
<feature type="binding site" evidence="1">
    <location>
        <position position="124"/>
    </location>
    <ligand>
        <name>L-aspartate</name>
        <dbReference type="ChEBI" id="CHEBI:29991"/>
    </ligand>
</feature>
<feature type="binding site" evidence="1">
    <location>
        <position position="128"/>
    </location>
    <ligand>
        <name>L-aspartate</name>
        <dbReference type="ChEBI" id="CHEBI:29991"/>
    </ligand>
</feature>
<feature type="binding site" evidence="1">
    <location>
        <position position="128"/>
    </location>
    <ligand>
        <name>L-citrulline</name>
        <dbReference type="ChEBI" id="CHEBI:57743"/>
    </ligand>
</feature>
<feature type="binding site" evidence="1">
    <location>
        <position position="129"/>
    </location>
    <ligand>
        <name>L-aspartate</name>
        <dbReference type="ChEBI" id="CHEBI:29991"/>
    </ligand>
</feature>
<feature type="binding site" evidence="1">
    <location>
        <position position="132"/>
    </location>
    <ligand>
        <name>L-citrulline</name>
        <dbReference type="ChEBI" id="CHEBI:57743"/>
    </ligand>
</feature>
<feature type="binding site" evidence="1">
    <location>
        <position position="181"/>
    </location>
    <ligand>
        <name>L-citrulline</name>
        <dbReference type="ChEBI" id="CHEBI:57743"/>
    </ligand>
</feature>
<feature type="binding site" evidence="1">
    <location>
        <position position="190"/>
    </location>
    <ligand>
        <name>L-citrulline</name>
        <dbReference type="ChEBI" id="CHEBI:57743"/>
    </ligand>
</feature>
<feature type="binding site" evidence="1">
    <location>
        <position position="266"/>
    </location>
    <ligand>
        <name>L-citrulline</name>
        <dbReference type="ChEBI" id="CHEBI:57743"/>
    </ligand>
</feature>
<feature type="binding site" evidence="1">
    <location>
        <position position="278"/>
    </location>
    <ligand>
        <name>L-citrulline</name>
        <dbReference type="ChEBI" id="CHEBI:57743"/>
    </ligand>
</feature>
<protein>
    <recommendedName>
        <fullName evidence="1">Argininosuccinate synthase</fullName>
        <ecNumber evidence="1">6.3.4.5</ecNumber>
    </recommendedName>
    <alternativeName>
        <fullName evidence="1">Citrulline--aspartate ligase</fullName>
    </alternativeName>
</protein>
<name>ASSY_SERP5</name>
<gene>
    <name evidence="1" type="primary">argG</name>
    <name type="ordered locus">Spro_4779</name>
</gene>
<comment type="catalytic activity">
    <reaction evidence="1">
        <text>L-citrulline + L-aspartate + ATP = 2-(N(omega)-L-arginino)succinate + AMP + diphosphate + H(+)</text>
        <dbReference type="Rhea" id="RHEA:10932"/>
        <dbReference type="ChEBI" id="CHEBI:15378"/>
        <dbReference type="ChEBI" id="CHEBI:29991"/>
        <dbReference type="ChEBI" id="CHEBI:30616"/>
        <dbReference type="ChEBI" id="CHEBI:33019"/>
        <dbReference type="ChEBI" id="CHEBI:57472"/>
        <dbReference type="ChEBI" id="CHEBI:57743"/>
        <dbReference type="ChEBI" id="CHEBI:456215"/>
        <dbReference type="EC" id="6.3.4.5"/>
    </reaction>
</comment>
<comment type="pathway">
    <text evidence="1">Amino-acid biosynthesis; L-arginine biosynthesis; L-arginine from L-ornithine and carbamoyl phosphate: step 2/3.</text>
</comment>
<comment type="subunit">
    <text evidence="1">Homotetramer.</text>
</comment>
<comment type="subcellular location">
    <subcellularLocation>
        <location evidence="1">Cytoplasm</location>
    </subcellularLocation>
</comment>
<comment type="similarity">
    <text evidence="1">Belongs to the argininosuccinate synthase family. Type 1 subfamily.</text>
</comment>
<sequence length="406" mass="44973">MQNQGIKKIVLAYSGGLDTSAIIPWLKENYGGCEVVAFVADIGQERSDLEGVEQKALQSGASECHVVDLREEFIRDYVYPVLQTGALYEGSYLLGTSMARPIIAKAQVELALKVGADAVCHGATGKGNDQVRFETTYTALAPHLKVVAPWREWNLRSREALLDYLKERNIPTTASLEKIYSRDENAWHISTEGGVLESPWNAPNKDCWVWTVDPQEAPDQPEQVTITVEKGCVVAVNGEALSPYKCLETLNVLGAKHGVGRIDIVENRLVGIKSRGCYETPGGTIMVAALRGVEQLVLDRDSFKWREQLGLEMSYVVYDGRWFAPLRRSLQASAEALAEEVNGEVVLQLYKGQVTAIQKKSANSLYSEEFATFGEDEVYDHSHAGGFIRLFSLSSRIRALNEIKNK</sequence>
<proteinExistence type="inferred from homology"/>
<reference key="1">
    <citation type="submission" date="2007-09" db="EMBL/GenBank/DDBJ databases">
        <title>Complete sequence of chromosome of Serratia proteamaculans 568.</title>
        <authorList>
            <consortium name="US DOE Joint Genome Institute"/>
            <person name="Copeland A."/>
            <person name="Lucas S."/>
            <person name="Lapidus A."/>
            <person name="Barry K."/>
            <person name="Glavina del Rio T."/>
            <person name="Dalin E."/>
            <person name="Tice H."/>
            <person name="Pitluck S."/>
            <person name="Chain P."/>
            <person name="Malfatti S."/>
            <person name="Shin M."/>
            <person name="Vergez L."/>
            <person name="Schmutz J."/>
            <person name="Larimer F."/>
            <person name="Land M."/>
            <person name="Hauser L."/>
            <person name="Kyrpides N."/>
            <person name="Kim E."/>
            <person name="Taghavi S."/>
            <person name="Newman L."/>
            <person name="Vangronsveld J."/>
            <person name="van der Lelie D."/>
            <person name="Richardson P."/>
        </authorList>
    </citation>
    <scope>NUCLEOTIDE SEQUENCE [LARGE SCALE GENOMIC DNA]</scope>
    <source>
        <strain>568</strain>
    </source>
</reference>
<evidence type="ECO:0000255" key="1">
    <source>
        <dbReference type="HAMAP-Rule" id="MF_00005"/>
    </source>
</evidence>